<gene>
    <name evidence="16" type="primary">NOP56</name>
    <name type="synonym">NOL5A</name>
</gene>
<proteinExistence type="evidence at protein level"/>
<reference key="1">
    <citation type="journal article" date="1997" name="Mol. Cell. Biol.">
        <title>Nucleolar KKE/D repeat proteins Nop56p and Nop58p interact with Nop1p and are required for ribosome biogenesis.</title>
        <authorList>
            <person name="Gautier T."/>
            <person name="Berges T."/>
            <person name="Tollervey D."/>
            <person name="Hurt E."/>
        </authorList>
    </citation>
    <scope>NUCLEOTIDE SEQUENCE [MRNA]</scope>
    <scope>SUBCELLULAR LOCATION</scope>
    <scope>VARIANT THR-475</scope>
    <source>
        <tissue>Cervix carcinoma</tissue>
    </source>
</reference>
<reference key="2">
    <citation type="journal article" date="2001" name="Nature">
        <title>The DNA sequence and comparative analysis of human chromosome 20.</title>
        <authorList>
            <person name="Deloukas P."/>
            <person name="Matthews L.H."/>
            <person name="Ashurst J.L."/>
            <person name="Burton J."/>
            <person name="Gilbert J.G.R."/>
            <person name="Jones M."/>
            <person name="Stavrides G."/>
            <person name="Almeida J.P."/>
            <person name="Babbage A.K."/>
            <person name="Bagguley C.L."/>
            <person name="Bailey J."/>
            <person name="Barlow K.F."/>
            <person name="Bates K.N."/>
            <person name="Beard L.M."/>
            <person name="Beare D.M."/>
            <person name="Beasley O.P."/>
            <person name="Bird C.P."/>
            <person name="Blakey S.E."/>
            <person name="Bridgeman A.M."/>
            <person name="Brown A.J."/>
            <person name="Buck D."/>
            <person name="Burrill W.D."/>
            <person name="Butler A.P."/>
            <person name="Carder C."/>
            <person name="Carter N.P."/>
            <person name="Chapman J.C."/>
            <person name="Clamp M."/>
            <person name="Clark G."/>
            <person name="Clark L.N."/>
            <person name="Clark S.Y."/>
            <person name="Clee C.M."/>
            <person name="Clegg S."/>
            <person name="Cobley V.E."/>
            <person name="Collier R.E."/>
            <person name="Connor R.E."/>
            <person name="Corby N.R."/>
            <person name="Coulson A."/>
            <person name="Coville G.J."/>
            <person name="Deadman R."/>
            <person name="Dhami P.D."/>
            <person name="Dunn M."/>
            <person name="Ellington A.G."/>
            <person name="Frankland J.A."/>
            <person name="Fraser A."/>
            <person name="French L."/>
            <person name="Garner P."/>
            <person name="Grafham D.V."/>
            <person name="Griffiths C."/>
            <person name="Griffiths M.N.D."/>
            <person name="Gwilliam R."/>
            <person name="Hall R.E."/>
            <person name="Hammond S."/>
            <person name="Harley J.L."/>
            <person name="Heath P.D."/>
            <person name="Ho S."/>
            <person name="Holden J.L."/>
            <person name="Howden P.J."/>
            <person name="Huckle E."/>
            <person name="Hunt A.R."/>
            <person name="Hunt S.E."/>
            <person name="Jekosch K."/>
            <person name="Johnson C.M."/>
            <person name="Johnson D."/>
            <person name="Kay M.P."/>
            <person name="Kimberley A.M."/>
            <person name="King A."/>
            <person name="Knights A."/>
            <person name="Laird G.K."/>
            <person name="Lawlor S."/>
            <person name="Lehvaeslaiho M.H."/>
            <person name="Leversha M.A."/>
            <person name="Lloyd C."/>
            <person name="Lloyd D.M."/>
            <person name="Lovell J.D."/>
            <person name="Marsh V.L."/>
            <person name="Martin S.L."/>
            <person name="McConnachie L.J."/>
            <person name="McLay K."/>
            <person name="McMurray A.A."/>
            <person name="Milne S.A."/>
            <person name="Mistry D."/>
            <person name="Moore M.J.F."/>
            <person name="Mullikin J.C."/>
            <person name="Nickerson T."/>
            <person name="Oliver K."/>
            <person name="Parker A."/>
            <person name="Patel R."/>
            <person name="Pearce T.A.V."/>
            <person name="Peck A.I."/>
            <person name="Phillimore B.J.C.T."/>
            <person name="Prathalingam S.R."/>
            <person name="Plumb R.W."/>
            <person name="Ramsay H."/>
            <person name="Rice C.M."/>
            <person name="Ross M.T."/>
            <person name="Scott C.E."/>
            <person name="Sehra H.K."/>
            <person name="Shownkeen R."/>
            <person name="Sims S."/>
            <person name="Skuce C.D."/>
            <person name="Smith M.L."/>
            <person name="Soderlund C."/>
            <person name="Steward C.A."/>
            <person name="Sulston J.E."/>
            <person name="Swann R.M."/>
            <person name="Sycamore N."/>
            <person name="Taylor R."/>
            <person name="Tee L."/>
            <person name="Thomas D.W."/>
            <person name="Thorpe A."/>
            <person name="Tracey A."/>
            <person name="Tromans A.C."/>
            <person name="Vaudin M."/>
            <person name="Wall M."/>
            <person name="Wallis J.M."/>
            <person name="Whitehead S.L."/>
            <person name="Whittaker P."/>
            <person name="Willey D.L."/>
            <person name="Williams L."/>
            <person name="Williams S.A."/>
            <person name="Wilming L."/>
            <person name="Wray P.W."/>
            <person name="Hubbard T."/>
            <person name="Durbin R.M."/>
            <person name="Bentley D.R."/>
            <person name="Beck S."/>
            <person name="Rogers J."/>
        </authorList>
    </citation>
    <scope>NUCLEOTIDE SEQUENCE [LARGE SCALE GENOMIC DNA]</scope>
</reference>
<reference key="3">
    <citation type="journal article" date="2004" name="Genome Res.">
        <title>The status, quality, and expansion of the NIH full-length cDNA project: the Mammalian Gene Collection (MGC).</title>
        <authorList>
            <consortium name="The MGC Project Team"/>
        </authorList>
    </citation>
    <scope>NUCLEOTIDE SEQUENCE [LARGE SCALE MRNA]</scope>
    <source>
        <tissue>Brain</tissue>
    </source>
</reference>
<reference key="4">
    <citation type="submission" date="2005-08" db="UniProtKB">
        <authorList>
            <person name="Bienvenut W.V."/>
        </authorList>
    </citation>
    <scope>PROTEIN SEQUENCE OF 21-41; 78-87; 91-99; 127-134; 191-202; 213-220; 231-240; 271-278; 289-333; 348-359; 405-415; 423-437 AND 541-553</scope>
    <scope>SUBCELLULAR LOCATION</scope>
    <scope>IDENTIFICATION BY MASS SPECTROMETRY</scope>
    <source>
        <tissue>Cervix carcinoma</tissue>
    </source>
</reference>
<reference key="5">
    <citation type="journal article" date="2002" name="Mol. Biol. Cell">
        <title>Functional proteomic analysis of human nucleolus.</title>
        <authorList>
            <person name="Scherl A."/>
            <person name="Coute Y."/>
            <person name="Deon C."/>
            <person name="Calle A."/>
            <person name="Kindbeiter K."/>
            <person name="Sanchez J.-C."/>
            <person name="Greco A."/>
            <person name="Hochstrasser D.F."/>
            <person name="Diaz J.-J."/>
        </authorList>
    </citation>
    <scope>SUBCELLULAR LOCATION [LARGE SCALE ANALYSIS]</scope>
    <source>
        <tissue>Cervix carcinoma</tissue>
    </source>
</reference>
<reference key="6">
    <citation type="journal article" date="2002" name="Mol. Cell. Biol.">
        <title>Conserved stem II of the box C/D motif is essential for nucleolar localization and is required, along with the 15.5K protein, for the hierarchical assembly of the box C/D snoRNP.</title>
        <authorList>
            <person name="Watkins N.J."/>
            <person name="Dickmanns A."/>
            <person name="Luhrmann R."/>
        </authorList>
    </citation>
    <scope>ASSOCIATION WITH U14 BOX C/D SNORNA</scope>
</reference>
<reference key="7">
    <citation type="journal article" date="2003" name="J. Biol. Chem.">
        <title>Proteomic analysis of human Nop56p-associated pre-ribosomal ribonucleoprotein complexes. Possible link between Nop56p and the nucleolar protein treacle responsible for Treacher Collins syndrome.</title>
        <authorList>
            <person name="Hayano T."/>
            <person name="Yanagida M."/>
            <person name="Yamauchi Y."/>
            <person name="Shinkawa T."/>
            <person name="Isobe T."/>
            <person name="Takahashi N."/>
        </authorList>
    </citation>
    <scope>FUNCTION</scope>
    <scope>SUBCELLULAR LOCATION</scope>
    <scope>IDENTIFICATION IN A PRE-RIBOSOMAL RNP COMPLEX</scope>
    <scope>INTERACTION WITH TCOF1</scope>
    <scope>IDENTIFICATION BY MASS SPECTROMETRY</scope>
</reference>
<reference key="8">
    <citation type="journal article" date="2004" name="Mol. Cell">
        <title>Assembly and maturation of the U3 snoRNP in the nucleoplasm in a large dynamic multiprotein complex.</title>
        <authorList>
            <person name="Watkins N.J."/>
            <person name="Lemm I."/>
            <person name="Ingelfinger D."/>
            <person name="Schneider C."/>
            <person name="Hossbach M."/>
            <person name="Urlaub H."/>
            <person name="Luehrmann R."/>
        </authorList>
    </citation>
    <scope>FUNCTION IN BOX C/D SNORNA BIOGENESIS</scope>
    <scope>ASSOCIATION WITH U3 BOX C/D SNORNA</scope>
    <scope>SUBCELLULAR LOCATION</scope>
</reference>
<reference key="9">
    <citation type="journal article" date="2006" name="Cell">
        <title>Global, in vivo, and site-specific phosphorylation dynamics in signaling networks.</title>
        <authorList>
            <person name="Olsen J.V."/>
            <person name="Blagoev B."/>
            <person name="Gnad F."/>
            <person name="Macek B."/>
            <person name="Kumar C."/>
            <person name="Mortensen P."/>
            <person name="Mann M."/>
        </authorList>
    </citation>
    <scope>IDENTIFICATION BY MASS SPECTROMETRY [LARGE SCALE ANALYSIS]</scope>
    <source>
        <tissue>Cervix carcinoma</tissue>
    </source>
</reference>
<reference key="10">
    <citation type="journal article" date="2007" name="Electrophoresis">
        <title>Toward a global characterization of the phosphoproteome in prostate cancer cells: identification of phosphoproteins in the LNCaP cell line.</title>
        <authorList>
            <person name="Giorgianni F."/>
            <person name="Zhao Y."/>
            <person name="Desiderio D.M."/>
            <person name="Beranova-Giorgianni S."/>
        </authorList>
    </citation>
    <scope>IDENTIFICATION BY MASS SPECTROMETRY [LARGE SCALE ANALYSIS]</scope>
    <source>
        <tissue>Prostate cancer</tissue>
    </source>
</reference>
<reference key="11">
    <citation type="journal article" date="2007" name="Mol. Cell. Biol.">
        <title>A dynamic scaffold of pre-snoRNP factors facilitates human box C/D snoRNP assembly.</title>
        <authorList>
            <person name="McKeegan K.S."/>
            <person name="Debieux C.M."/>
            <person name="Boulon S."/>
            <person name="Bertrand E."/>
            <person name="Watkins N.J."/>
        </authorList>
    </citation>
    <scope>ASSOCIATION WITH U8 BOX C/D SNORNA</scope>
    <scope>INTERACTION WITH NUFIP1</scope>
</reference>
<reference key="12">
    <citation type="journal article" date="2008" name="Mol. Cell">
        <title>Kinase-selective enrichment enables quantitative phosphoproteomics of the kinome across the cell cycle.</title>
        <authorList>
            <person name="Daub H."/>
            <person name="Olsen J.V."/>
            <person name="Bairlein M."/>
            <person name="Gnad F."/>
            <person name="Oppermann F.S."/>
            <person name="Korner R."/>
            <person name="Greff Z."/>
            <person name="Keri G."/>
            <person name="Stemmann O."/>
            <person name="Mann M."/>
        </authorList>
    </citation>
    <scope>IDENTIFICATION BY MASS SPECTROMETRY [LARGE SCALE ANALYSIS]</scope>
    <source>
        <tissue>Cervix carcinoma</tissue>
    </source>
</reference>
<reference key="13">
    <citation type="journal article" date="2008" name="Proc. Natl. Acad. Sci. U.S.A.">
        <title>A quantitative atlas of mitotic phosphorylation.</title>
        <authorList>
            <person name="Dephoure N."/>
            <person name="Zhou C."/>
            <person name="Villen J."/>
            <person name="Beausoleil S.A."/>
            <person name="Bakalarski C.E."/>
            <person name="Elledge S.J."/>
            <person name="Gygi S.P."/>
        </authorList>
    </citation>
    <scope>PHOSPHORYLATION [LARGE SCALE ANALYSIS] AT SER-511; SER-519; SER-520; SER-570; SER-579 AND SER-581</scope>
    <scope>IDENTIFICATION BY MASS SPECTROMETRY [LARGE SCALE ANALYSIS]</scope>
    <source>
        <tissue>Cervix carcinoma</tissue>
    </source>
</reference>
<reference key="14">
    <citation type="journal article" date="2009" name="Anal. Chem.">
        <title>Lys-N and trypsin cover complementary parts of the phosphoproteome in a refined SCX-based approach.</title>
        <authorList>
            <person name="Gauci S."/>
            <person name="Helbig A.O."/>
            <person name="Slijper M."/>
            <person name="Krijgsveld J."/>
            <person name="Heck A.J."/>
            <person name="Mohammed S."/>
        </authorList>
    </citation>
    <scope>IDENTIFICATION BY MASS SPECTROMETRY [LARGE SCALE ANALYSIS]</scope>
</reference>
<reference key="15">
    <citation type="journal article" date="2009" name="Mol. Cell. Biol.">
        <title>Evidence that the AAA+ proteins TIP48 and TIP49 bridge interactions between 15.5K and the related NOP56 and NOP58 proteins during box C/D snoRNP biogenesis.</title>
        <authorList>
            <person name="McKeegan K.S."/>
            <person name="Debieux C.M."/>
            <person name="Watkins N.J."/>
        </authorList>
    </citation>
    <scope>INTERACTION WITH RUVBL1 AND RUVBL2</scope>
</reference>
<reference key="16">
    <citation type="journal article" date="2009" name="Sci. Signal.">
        <title>Quantitative phosphoproteomic analysis of T cell receptor signaling reveals system-wide modulation of protein-protein interactions.</title>
        <authorList>
            <person name="Mayya V."/>
            <person name="Lundgren D.H."/>
            <person name="Hwang S.-I."/>
            <person name="Rezaul K."/>
            <person name="Wu L."/>
            <person name="Eng J.K."/>
            <person name="Rodionov V."/>
            <person name="Han D.K."/>
        </authorList>
    </citation>
    <scope>PHOSPHORYLATION [LARGE SCALE ANALYSIS] AT SER-519; SER-520 AND SER-569</scope>
    <scope>IDENTIFICATION BY MASS SPECTROMETRY [LARGE SCALE ANALYSIS]</scope>
    <source>
        <tissue>Leukemic T-cell</tissue>
    </source>
</reference>
<reference key="17">
    <citation type="journal article" date="2010" name="Sci. Signal.">
        <title>Quantitative phosphoproteomics reveals widespread full phosphorylation site occupancy during mitosis.</title>
        <authorList>
            <person name="Olsen J.V."/>
            <person name="Vermeulen M."/>
            <person name="Santamaria A."/>
            <person name="Kumar C."/>
            <person name="Miller M.L."/>
            <person name="Jensen L.J."/>
            <person name="Gnad F."/>
            <person name="Cox J."/>
            <person name="Jensen T.S."/>
            <person name="Nigg E.A."/>
            <person name="Brunak S."/>
            <person name="Mann M."/>
        </authorList>
    </citation>
    <scope>PHOSPHORYLATION [LARGE SCALE ANALYSIS] AT SER-520</scope>
    <scope>IDENTIFICATION BY MASS SPECTROMETRY [LARGE SCALE ANALYSIS]</scope>
    <source>
        <tissue>Cervix carcinoma</tissue>
    </source>
</reference>
<reference key="18">
    <citation type="journal article" date="2011" name="Am. J. Hum. Genet.">
        <title>Expansion of intronic GGCCTG hexanucleotide repeat in NOP56 causes SCA36, a type of spinocerebellar ataxia accompanied by motor neuron involvement.</title>
        <authorList>
            <person name="Kobayashi H."/>
            <person name="Abe K."/>
            <person name="Matsuura T."/>
            <person name="Ikeda Y."/>
            <person name="Hitomi T."/>
            <person name="Akechi Y."/>
            <person name="Habu T."/>
            <person name="Liu W."/>
            <person name="Okuda H."/>
            <person name="Koizumi A."/>
        </authorList>
    </citation>
    <scope>INVOLVEMENT IN SCA36</scope>
</reference>
<reference key="19">
    <citation type="journal article" date="2011" name="BMC Syst. Biol.">
        <title>Initial characterization of the human central proteome.</title>
        <authorList>
            <person name="Burkard T.R."/>
            <person name="Planyavsky M."/>
            <person name="Kaupe I."/>
            <person name="Breitwieser F.P."/>
            <person name="Buerckstuemmer T."/>
            <person name="Bennett K.L."/>
            <person name="Superti-Furga G."/>
            <person name="Colinge J."/>
        </authorList>
    </citation>
    <scope>IDENTIFICATION BY MASS SPECTROMETRY [LARGE SCALE ANALYSIS]</scope>
</reference>
<reference key="20">
    <citation type="journal article" date="2011" name="Sci. Signal.">
        <title>System-wide temporal characterization of the proteome and phosphoproteome of human embryonic stem cell differentiation.</title>
        <authorList>
            <person name="Rigbolt K.T."/>
            <person name="Prokhorova T.A."/>
            <person name="Akimov V."/>
            <person name="Henningsen J."/>
            <person name="Johansen P.T."/>
            <person name="Kratchmarova I."/>
            <person name="Kassem M."/>
            <person name="Mann M."/>
            <person name="Olsen J.V."/>
            <person name="Blagoev B."/>
        </authorList>
    </citation>
    <scope>PHOSPHORYLATION [LARGE SCALE ANALYSIS] AT SER-314 AND SER-570</scope>
    <scope>IDENTIFICATION BY MASS SPECTROMETRY [LARGE SCALE ANALYSIS]</scope>
</reference>
<reference key="21">
    <citation type="journal article" date="2013" name="J. Proteome Res.">
        <title>Toward a comprehensive characterization of a human cancer cell phosphoproteome.</title>
        <authorList>
            <person name="Zhou H."/>
            <person name="Di Palma S."/>
            <person name="Preisinger C."/>
            <person name="Peng M."/>
            <person name="Polat A.N."/>
            <person name="Heck A.J."/>
            <person name="Mohammed S."/>
        </authorList>
    </citation>
    <scope>PHOSPHORYLATION [LARGE SCALE ANALYSIS] AT SER-314; SER-519; SER-520; SER-563; SER-569 AND SER-570</scope>
    <scope>IDENTIFICATION BY MASS SPECTROMETRY [LARGE SCALE ANALYSIS]</scope>
    <source>
        <tissue>Cervix carcinoma</tissue>
        <tissue>Erythroleukemia</tissue>
    </source>
</reference>
<reference key="22">
    <citation type="journal article" date="2014" name="J. Proteomics">
        <title>An enzyme assisted RP-RPLC approach for in-depth analysis of human liver phosphoproteome.</title>
        <authorList>
            <person name="Bian Y."/>
            <person name="Song C."/>
            <person name="Cheng K."/>
            <person name="Dong M."/>
            <person name="Wang F."/>
            <person name="Huang J."/>
            <person name="Sun D."/>
            <person name="Wang L."/>
            <person name="Ye M."/>
            <person name="Zou H."/>
        </authorList>
    </citation>
    <scope>PHOSPHORYLATION [LARGE SCALE ANALYSIS] AT SER-520 AND SER-563</scope>
    <scope>IDENTIFICATION BY MASS SPECTROMETRY [LARGE SCALE ANALYSIS]</scope>
    <source>
        <tissue>Liver</tissue>
    </source>
</reference>
<reference key="23">
    <citation type="journal article" date="2014" name="Mol. Cell. Proteomics">
        <title>Immunoaffinity enrichment and mass spectrometry analysis of protein methylation.</title>
        <authorList>
            <person name="Guo A."/>
            <person name="Gu H."/>
            <person name="Zhou J."/>
            <person name="Mulhern D."/>
            <person name="Wang Y."/>
            <person name="Lee K.A."/>
            <person name="Yang V."/>
            <person name="Aguiar M."/>
            <person name="Kornhauser J."/>
            <person name="Jia X."/>
            <person name="Ren J."/>
            <person name="Beausoleil S.A."/>
            <person name="Silva J.C."/>
            <person name="Vemulapalli V."/>
            <person name="Bedford M.T."/>
            <person name="Comb M.J."/>
        </authorList>
    </citation>
    <scope>METHYLATION [LARGE SCALE ANALYSIS] AT ARG-359</scope>
    <scope>IDENTIFICATION BY MASS SPECTROMETRY [LARGE SCALE ANALYSIS]</scope>
    <source>
        <tissue>Colon carcinoma</tissue>
    </source>
</reference>
<reference key="24">
    <citation type="journal article" date="2015" name="Cell Rep.">
        <title>SUMO-2 orchestrates chromatin modifiers in response to DNA damage.</title>
        <authorList>
            <person name="Hendriks I.A."/>
            <person name="Treffers L.W."/>
            <person name="Verlaan-de Vries M."/>
            <person name="Olsen J.V."/>
            <person name="Vertegaal A.C."/>
        </authorList>
    </citation>
    <scope>SUMOYLATION [LARGE SCALE ANALYSIS] AT LYS-540</scope>
    <scope>IDENTIFICATION BY MASS SPECTROMETRY [LARGE SCALE ANALYSIS]</scope>
</reference>
<reference key="25">
    <citation type="journal article" date="2015" name="Mol. Cell. Proteomics">
        <title>System-wide analysis of SUMOylation dynamics in response to replication stress reveals novel small ubiquitin-like modified target proteins and acceptor lysines relevant for genome stability.</title>
        <authorList>
            <person name="Xiao Z."/>
            <person name="Chang J.G."/>
            <person name="Hendriks I.A."/>
            <person name="Sigurdsson J.O."/>
            <person name="Olsen J.V."/>
            <person name="Vertegaal A.C."/>
        </authorList>
    </citation>
    <scope>SUMOYLATION [LARGE SCALE ANALYSIS] AT LYS-540</scope>
    <scope>IDENTIFICATION BY MASS SPECTROMETRY [LARGE SCALE ANALYSIS]</scope>
</reference>
<reference key="26">
    <citation type="journal article" date="2017" name="Nat. Struct. Mol. Biol.">
        <title>Site-specific mapping of the human SUMO proteome reveals co-modification with phosphorylation.</title>
        <authorList>
            <person name="Hendriks I.A."/>
            <person name="Lyon D."/>
            <person name="Young C."/>
            <person name="Jensen L.J."/>
            <person name="Vertegaal A.C."/>
            <person name="Nielsen M.L."/>
        </authorList>
    </citation>
    <scope>SUMOYLATION [LARGE SCALE ANALYSIS] AT LYS-87; LYS-230; LYS-240; LYS-540 AND LYS-564</scope>
    <scope>IDENTIFICATION BY MASS SPECTROMETRY [LARGE SCALE ANALYSIS]</scope>
</reference>
<reference key="27">
    <citation type="journal article" date="2022" name="Nucleic Acids Res.">
        <title>Human NOP2/NSUN1 regulates ribosome biogenesis through non-catalytic complex formation with box C/D snoRNPs.</title>
        <authorList>
            <person name="Liao H."/>
            <person name="Gaur A."/>
            <person name="McConie H."/>
            <person name="Shekar A."/>
            <person name="Wang K."/>
            <person name="Chang J.T."/>
            <person name="Breton G."/>
            <person name="Denicourt C."/>
        </authorList>
    </citation>
    <scope>INTERACTION WITH NOP2; FBL; RUVBL1 AND NUFIP1</scope>
</reference>
<reference key="28">
    <citation type="journal article" date="2024" name="Proc. Natl. Acad. Sci. U.S.A.">
        <title>Identification of FBLL1 as a neuron-specific RNA 2'-O-methyltransferase mediating neuronal differentiation.</title>
        <authorList>
            <person name="Zhang D."/>
            <person name="Li B."/>
            <person name="Xu H."/>
            <person name="Li J."/>
            <person name="Ma C."/>
            <person name="Ge W."/>
            <person name="Lu C."/>
            <person name="Cao X."/>
        </authorList>
    </citation>
    <scope>FUNCTION</scope>
    <scope>IDENTIFICATION AS PART OF A BOX C/D SMALL NUCLEOLAR RIBONUCLEOPROTEIN (SNORNP) COMPLEX</scope>
</reference>
<reference evidence="17 18 19" key="29">
    <citation type="journal article" date="2021" name="Science">
        <title>Nucleolar maturation of the human small subunit processome.</title>
        <authorList>
            <person name="Singh S."/>
            <person name="Vanden Broeck A."/>
            <person name="Miller L."/>
            <person name="Chaker-Margot M."/>
            <person name="Klinge S."/>
        </authorList>
    </citation>
    <scope>STRUCTURE BY ELECTRON MICROSCOPY (2.70 ANGSTROMS)</scope>
    <scope>FUNCTION</scope>
    <scope>SUBUNIT</scope>
    <scope>SUBCELLULAR LOCATION</scope>
</reference>
<dbReference type="EMBL" id="Y12065">
    <property type="protein sequence ID" value="CAA72789.1"/>
    <property type="status" value="ALT_INIT"/>
    <property type="molecule type" value="mRNA"/>
</dbReference>
<dbReference type="EMBL" id="AL049712">
    <property type="status" value="NOT_ANNOTATED_CDS"/>
    <property type="molecule type" value="Genomic_DNA"/>
</dbReference>
<dbReference type="EMBL" id="BC104791">
    <property type="protein sequence ID" value="AAI04792.1"/>
    <property type="molecule type" value="mRNA"/>
</dbReference>
<dbReference type="EMBL" id="BC104793">
    <property type="protein sequence ID" value="AAI04794.1"/>
    <property type="molecule type" value="mRNA"/>
</dbReference>
<dbReference type="CCDS" id="CCDS13030.1"/>
<dbReference type="RefSeq" id="NP_006383.2">
    <property type="nucleotide sequence ID" value="NM_006392.3"/>
</dbReference>
<dbReference type="PDB" id="7MQ8">
    <property type="method" value="EM"/>
    <property type="resolution" value="3.60 A"/>
    <property type="chains" value="SA=1-594"/>
</dbReference>
<dbReference type="PDB" id="7MQ9">
    <property type="method" value="EM"/>
    <property type="resolution" value="3.87 A"/>
    <property type="chains" value="SA=1-594"/>
</dbReference>
<dbReference type="PDB" id="7MQA">
    <property type="method" value="EM"/>
    <property type="resolution" value="2.70 A"/>
    <property type="chains" value="SA=1-594"/>
</dbReference>
<dbReference type="PDBsum" id="7MQ8"/>
<dbReference type="PDBsum" id="7MQ9"/>
<dbReference type="PDBsum" id="7MQA"/>
<dbReference type="EMDB" id="EMD-23936"/>
<dbReference type="EMDB" id="EMD-23937"/>
<dbReference type="EMDB" id="EMD-23938"/>
<dbReference type="SMR" id="O00567"/>
<dbReference type="BioGRID" id="115783">
    <property type="interactions" value="617"/>
</dbReference>
<dbReference type="ComplexPortal" id="CPX-2511">
    <property type="entry name" value="Small ribosomal subunit processome"/>
</dbReference>
<dbReference type="CORUM" id="O00567"/>
<dbReference type="FunCoup" id="O00567">
    <property type="interactions" value="3121"/>
</dbReference>
<dbReference type="IntAct" id="O00567">
    <property type="interactions" value="245"/>
</dbReference>
<dbReference type="MINT" id="O00567"/>
<dbReference type="STRING" id="9606.ENSP00000370589"/>
<dbReference type="GlyConnect" id="1580">
    <property type="glycosylation" value="1 N-Linked glycan (1 site)"/>
</dbReference>
<dbReference type="GlyCosmos" id="O00567">
    <property type="glycosylation" value="1 site, 1 glycan"/>
</dbReference>
<dbReference type="GlyGen" id="O00567">
    <property type="glycosylation" value="4 sites, 2 N-linked glycans (1 site), 2 O-linked glycans (3 sites)"/>
</dbReference>
<dbReference type="iPTMnet" id="O00567"/>
<dbReference type="MetOSite" id="O00567"/>
<dbReference type="PhosphoSitePlus" id="O00567"/>
<dbReference type="SwissPalm" id="O00567"/>
<dbReference type="BioMuta" id="NOP56"/>
<dbReference type="jPOST" id="O00567"/>
<dbReference type="MassIVE" id="O00567"/>
<dbReference type="PaxDb" id="9606-ENSP00000370589"/>
<dbReference type="PeptideAtlas" id="O00567"/>
<dbReference type="ProteomicsDB" id="47980"/>
<dbReference type="Pumba" id="O00567"/>
<dbReference type="Antibodypedia" id="23219">
    <property type="antibodies" value="124 antibodies from 26 providers"/>
</dbReference>
<dbReference type="DNASU" id="10528"/>
<dbReference type="Ensembl" id="ENST00000329276.10">
    <property type="protein sequence ID" value="ENSP00000370589.3"/>
    <property type="gene ID" value="ENSG00000101361.17"/>
</dbReference>
<dbReference type="GeneID" id="10528"/>
<dbReference type="KEGG" id="hsa:10528"/>
<dbReference type="MANE-Select" id="ENST00000329276.10">
    <property type="protein sequence ID" value="ENSP00000370589.3"/>
    <property type="RefSeq nucleotide sequence ID" value="NM_006392.4"/>
    <property type="RefSeq protein sequence ID" value="NP_006383.2"/>
</dbReference>
<dbReference type="UCSC" id="uc002wgh.4">
    <property type="organism name" value="human"/>
</dbReference>
<dbReference type="AGR" id="HGNC:15911"/>
<dbReference type="CTD" id="10528"/>
<dbReference type="DisGeNET" id="10528"/>
<dbReference type="GeneCards" id="NOP56"/>
<dbReference type="GeneReviews" id="NOP56"/>
<dbReference type="HGNC" id="HGNC:15911">
    <property type="gene designation" value="NOP56"/>
</dbReference>
<dbReference type="HPA" id="ENSG00000101361">
    <property type="expression patterns" value="Low tissue specificity"/>
</dbReference>
<dbReference type="MalaCards" id="NOP56"/>
<dbReference type="MIM" id="614153">
    <property type="type" value="phenotype"/>
</dbReference>
<dbReference type="MIM" id="614154">
    <property type="type" value="gene"/>
</dbReference>
<dbReference type="neXtProt" id="NX_O00567"/>
<dbReference type="OpenTargets" id="ENSG00000101361"/>
<dbReference type="Orphanet" id="276198">
    <property type="disease" value="Spinocerebellar ataxia type 36"/>
</dbReference>
<dbReference type="PharmGKB" id="PA164724063"/>
<dbReference type="VEuPathDB" id="HostDB:ENSG00000101361"/>
<dbReference type="eggNOG" id="KOG2573">
    <property type="taxonomic scope" value="Eukaryota"/>
</dbReference>
<dbReference type="GeneTree" id="ENSGT00940000153534"/>
<dbReference type="HOGENOM" id="CLU_015495_4_0_1"/>
<dbReference type="InParanoid" id="O00567"/>
<dbReference type="OMA" id="PDNYMFA"/>
<dbReference type="OrthoDB" id="6780543at2759"/>
<dbReference type="PAN-GO" id="O00567">
    <property type="GO annotations" value="3 GO annotations based on evolutionary models"/>
</dbReference>
<dbReference type="PhylomeDB" id="O00567"/>
<dbReference type="TreeFam" id="TF105713"/>
<dbReference type="PathwayCommons" id="O00567"/>
<dbReference type="Reactome" id="R-HSA-390471">
    <property type="pathway name" value="Association of TriC/CCT with target proteins during biosynthesis"/>
</dbReference>
<dbReference type="Reactome" id="R-HSA-6790901">
    <property type="pathway name" value="rRNA modification in the nucleus and cytosol"/>
</dbReference>
<dbReference type="Reactome" id="R-HSA-6791226">
    <property type="pathway name" value="Major pathway of rRNA processing in the nucleolus and cytosol"/>
</dbReference>
<dbReference type="SignaLink" id="O00567"/>
<dbReference type="BioGRID-ORCS" id="10528">
    <property type="hits" value="805 hits in 1163 CRISPR screens"/>
</dbReference>
<dbReference type="CD-CODE" id="232F8A39">
    <property type="entry name" value="P-body"/>
</dbReference>
<dbReference type="CD-CODE" id="6F24707C">
    <property type="entry name" value="Cajal body"/>
</dbReference>
<dbReference type="CD-CODE" id="91857CE7">
    <property type="entry name" value="Nucleolus"/>
</dbReference>
<dbReference type="ChiTaRS" id="NOP56">
    <property type="organism name" value="human"/>
</dbReference>
<dbReference type="GeneWiki" id="NOL5A"/>
<dbReference type="GenomeRNAi" id="10528"/>
<dbReference type="Pharos" id="O00567">
    <property type="development level" value="Tbio"/>
</dbReference>
<dbReference type="PRO" id="PR:O00567"/>
<dbReference type="Proteomes" id="UP000005640">
    <property type="component" value="Chromosome 20"/>
</dbReference>
<dbReference type="RNAct" id="O00567">
    <property type="molecule type" value="protein"/>
</dbReference>
<dbReference type="Bgee" id="ENSG00000101361">
    <property type="expression patterns" value="Expressed in cervix squamous epithelium and 209 other cell types or tissues"/>
</dbReference>
<dbReference type="ExpressionAtlas" id="O00567">
    <property type="expression patterns" value="baseline and differential"/>
</dbReference>
<dbReference type="GO" id="GO:0031428">
    <property type="term" value="C:box C/D methylation guide snoRNP complex"/>
    <property type="evidence" value="ECO:0000314"/>
    <property type="project" value="UniProtKB"/>
</dbReference>
<dbReference type="GO" id="GO:0005737">
    <property type="term" value="C:cytoplasm"/>
    <property type="evidence" value="ECO:0007669"/>
    <property type="project" value="UniProtKB-SubCell"/>
</dbReference>
<dbReference type="GO" id="GO:0001650">
    <property type="term" value="C:fibrillar center"/>
    <property type="evidence" value="ECO:0000314"/>
    <property type="project" value="HPA"/>
</dbReference>
<dbReference type="GO" id="GO:0016020">
    <property type="term" value="C:membrane"/>
    <property type="evidence" value="ECO:0007005"/>
    <property type="project" value="UniProtKB"/>
</dbReference>
<dbReference type="GO" id="GO:0005730">
    <property type="term" value="C:nucleolus"/>
    <property type="evidence" value="ECO:0000304"/>
    <property type="project" value="ProtInc"/>
</dbReference>
<dbReference type="GO" id="GO:0005654">
    <property type="term" value="C:nucleoplasm"/>
    <property type="evidence" value="ECO:0000304"/>
    <property type="project" value="Reactome"/>
</dbReference>
<dbReference type="GO" id="GO:0070761">
    <property type="term" value="C:pre-snoRNP complex"/>
    <property type="evidence" value="ECO:0000314"/>
    <property type="project" value="BHF-UCL"/>
</dbReference>
<dbReference type="GO" id="GO:0032040">
    <property type="term" value="C:small-subunit processome"/>
    <property type="evidence" value="ECO:0000314"/>
    <property type="project" value="UniProtKB"/>
</dbReference>
<dbReference type="GO" id="GO:0005732">
    <property type="term" value="C:sno(s)RNA-containing ribonucleoprotein complex"/>
    <property type="evidence" value="ECO:0000314"/>
    <property type="project" value="BHF-UCL"/>
</dbReference>
<dbReference type="GO" id="GO:0045296">
    <property type="term" value="F:cadherin binding"/>
    <property type="evidence" value="ECO:0007005"/>
    <property type="project" value="BHF-UCL"/>
</dbReference>
<dbReference type="GO" id="GO:1990226">
    <property type="term" value="F:histone methyltransferase binding"/>
    <property type="evidence" value="ECO:0000353"/>
    <property type="project" value="UniProtKB"/>
</dbReference>
<dbReference type="GO" id="GO:0003723">
    <property type="term" value="F:RNA binding"/>
    <property type="evidence" value="ECO:0007005"/>
    <property type="project" value="UniProtKB"/>
</dbReference>
<dbReference type="GO" id="GO:0030515">
    <property type="term" value="F:snoRNA binding"/>
    <property type="evidence" value="ECO:0000314"/>
    <property type="project" value="BHF-UCL"/>
</dbReference>
<dbReference type="GO" id="GO:0042274">
    <property type="term" value="P:ribosomal small subunit biogenesis"/>
    <property type="evidence" value="ECO:0000314"/>
    <property type="project" value="UniProtKB"/>
</dbReference>
<dbReference type="GO" id="GO:0006364">
    <property type="term" value="P:rRNA processing"/>
    <property type="evidence" value="ECO:0000304"/>
    <property type="project" value="ProtInc"/>
</dbReference>
<dbReference type="FunFam" id="1.10.246.90:FF:000001">
    <property type="entry name" value="Nucleolar protein 56"/>
    <property type="match status" value="1"/>
</dbReference>
<dbReference type="FunFam" id="1.10.287.4070:FF:000002">
    <property type="entry name" value="Nucleolar protein 56"/>
    <property type="match status" value="1"/>
</dbReference>
<dbReference type="Gene3D" id="1.10.287.4070">
    <property type="match status" value="1"/>
</dbReference>
<dbReference type="Gene3D" id="1.10.246.90">
    <property type="entry name" value="Nop domain"/>
    <property type="match status" value="1"/>
</dbReference>
<dbReference type="InterPro" id="IPR045056">
    <property type="entry name" value="Nop56/Nop58"/>
</dbReference>
<dbReference type="InterPro" id="IPR012974">
    <property type="entry name" value="NOP58/56_N"/>
</dbReference>
<dbReference type="InterPro" id="IPR042239">
    <property type="entry name" value="Nop_C"/>
</dbReference>
<dbReference type="InterPro" id="IPR002687">
    <property type="entry name" value="Nop_dom"/>
</dbReference>
<dbReference type="InterPro" id="IPR036070">
    <property type="entry name" value="Nop_dom_sf"/>
</dbReference>
<dbReference type="InterPro" id="IPR012976">
    <property type="entry name" value="NOSIC"/>
</dbReference>
<dbReference type="PANTHER" id="PTHR10894">
    <property type="entry name" value="NUCLEOLAR PROTEIN 5 NUCLEOLAR PROTEIN NOP5 NOP58"/>
    <property type="match status" value="1"/>
</dbReference>
<dbReference type="PANTHER" id="PTHR10894:SF0">
    <property type="entry name" value="NUCLEOLAR PROTEIN 56"/>
    <property type="match status" value="1"/>
</dbReference>
<dbReference type="Pfam" id="PF01798">
    <property type="entry name" value="Nop"/>
    <property type="match status" value="1"/>
</dbReference>
<dbReference type="Pfam" id="PF08156">
    <property type="entry name" value="NOP5NT"/>
    <property type="match status" value="1"/>
</dbReference>
<dbReference type="SMART" id="SM00931">
    <property type="entry name" value="NOSIC"/>
    <property type="match status" value="1"/>
</dbReference>
<dbReference type="SUPFAM" id="SSF89124">
    <property type="entry name" value="Nop domain"/>
    <property type="match status" value="1"/>
</dbReference>
<dbReference type="PROSITE" id="PS51358">
    <property type="entry name" value="NOP"/>
    <property type="match status" value="1"/>
</dbReference>
<comment type="function">
    <text evidence="5 6 10 12">Involved in the early to middle stages of 60S ribosomal subunit biogenesis. Required for the biogenesis of box C/D snoRNAs such U3, U8 and U14 snoRNAs (PubMed:12777385, PubMed:15574333). Part of the small subunit (SSU) processome, first precursor of the small eukaryotic ribosomal subunit. During the assembly of the SSU processome in the nucleolus, many ribosome biogenesis factors, an RNA chaperone and ribosomal proteins associate with the nascent pre-rRNA and work in concert to generate RNA folding, modifications, rearrangements and cleavage as well as targeted degradation of pre-ribosomal RNA by the RNA exosome (PubMed:34516797). Core component of box C/D small nucleolar ribonucleoprotein (snoRNP) complexes that function in methylation of multiple sites on ribosomal RNAs (rRNAs) and messenger RNAs (mRNAs) (PubMed:12777385, PubMed:39570315).</text>
</comment>
<comment type="subunit">
    <text evidence="5 7 8 10 11 12">Part of a large pre-ribosomal ribonucleoprotein (RNP) complex, that consists of at least 62 ribosomal proteins, 45 nonribosomal proteins and both pre-rRNA and mature rRNA species. Within this complex directly interacts with TCOF1 in an RNA-independent manner. Core component of box C/D small nucleolar ribonucleoprotein (snoRNP) particles; the core proteins SNU13, NOP56, NOP58 and FBL or FBLL1 assemble stepwise onto the snoRNA. Interacts with NOP1 and NOP58. Interacts with NUFIP1, RUVBL1 and RUVBL2; RUVBL1:RUVBL2 seem to bridge the association of NOP56 with NUFIP1. Part of the small subunit (SSU) processome, composed of more than 70 proteins and the RNA chaperone small nucleolar RNA (snoRNA) U3 (PubMed:34516797). Interacts with NOP2 and FBL (PubMed:36161484).</text>
</comment>
<comment type="interaction">
    <interactant intactId="EBI-396034">
        <id>O00567</id>
    </interactant>
    <interactant intactId="EBI-2115327">
        <id>O43818</id>
        <label>RRP9</label>
    </interactant>
    <organismsDiffer>false</organismsDiffer>
    <experiments>2</experiments>
</comment>
<comment type="interaction">
    <interactant intactId="EBI-396034">
        <id>O00567</id>
    </interactant>
    <interactant intactId="EBI-742426">
        <id>Q9H190</id>
        <label>SDCBP2</label>
    </interactant>
    <organismsDiffer>false</organismsDiffer>
    <experiments>3</experiments>
</comment>
<comment type="subcellular location">
    <subcellularLocation>
        <location evidence="4 5 10 13">Nucleus</location>
        <location evidence="4 5 10 13">Nucleolus</location>
    </subcellularLocation>
    <subcellularLocation>
        <location evidence="1">Cytoplasm</location>
    </subcellularLocation>
    <subcellularLocation>
        <location evidence="15">Nucleus</location>
        <location evidence="15">Nucleoplasm</location>
    </subcellularLocation>
</comment>
<comment type="disease" evidence="9">
    <disease id="DI-03245">
        <name>Spinocerebellar ataxia 36</name>
        <acronym>SCA36</acronym>
        <description>A form of spinocerebellar ataxia, a clinically and genetically heterogeneous group of cerebellar disorders. Patients show progressive incoordination of gait and often poor coordination of hands, speech and eye movements, due to degeneration of the cerebellum with variable involvement of the brainstem and spinal cord. SCA36 is characterized by complicated clinical features, with ataxia as the first symptom, followed by characteristic late-onset involvement of the motor neuron system. Ataxic symptoms, such as gait and truncal instability, ataxic dysarthria, and uncoordinated limbs, start in late forties to fifties. Characteristically, affected individuals exhibit tongue atrophy with fasciculation. Progression of motor neuron involvement is typically limited to the tongue and main proximal skeletal muscles in both upper and lower extremities.</description>
        <dbReference type="MIM" id="614153"/>
    </disease>
    <text>The disease is caused by variants affecting the gene represented in this entry. Caused by large hexanucleotide CGCCTG repeat expansions within intron 1. These expansions induce RNA foci and sequester the RNA-binding protein SRSF2. In addition, the transcription of MIR1292, a microRNA gene located just 19 bp 3' of the GGCCTG repeat, is significantly decreased.</text>
</comment>
<comment type="similarity">
    <text evidence="14">Belongs to the NOP5/NOP56 family.</text>
</comment>
<comment type="sequence caution" evidence="14">
    <conflict type="erroneous initiation">
        <sequence resource="EMBL-CDS" id="CAA72789"/>
    </conflict>
    <text>Extended N-terminus.</text>
</comment>
<protein>
    <recommendedName>
        <fullName>Nucleolar protein 56</fullName>
    </recommendedName>
    <alternativeName>
        <fullName>Nucleolar protein 5A</fullName>
    </alternativeName>
</protein>
<name>NOP56_HUMAN</name>
<sequence length="594" mass="66050">MVLLHVLFEHAVGYALLALKEVEEISLLQPQVEESVLNLGKFHSIVRLVAFCPFASSQVALENANAVSEGVVHEDLRLLLETHLPSKKKKVLLGVGDPKIGAAIQEELGYNCQTGGVIAEILRGVRLHFHNLVKGLTDLSACKAQLGLGHSYSRAKVKFNVNRVDNMIIQSISLLDQLDKDINTFSMRVREWYGYHFPELVKIINDNATYCRLAQFIGNRRELNEDKLEKLEELTMDGAKAKAILDASRSSMGMDISAIDLINIESFSSRVVSLSEYRQSLHTYLRSKMSQVAPSLSALIGEAVGARLIAHAGSLTNLAKYPASTVQILGAEKALFRALKTRGNTPKYGLIFHSTFIGRAAAKNKGRISRYLANKCSIASRIDCFSEVPTSVFGEKLREQVEERLSFYETGEIPRKNLDVMKEAMVQAEEAAAEITRKLEKQEKKRLKKEKKRLAALALASSENSSSTPEECEEMSEKPKKKKKQKPQEVPQENGMEDPSISFSKPKKKKSFSKEELMSSDLEETAGSTSIPKRKKSTPKEETVNDPEEAGHRSGSKKKRKFSKEEPVSSGPEEAVGKSSSKKKKKFHKASQED</sequence>
<keyword id="KW-0002">3D-structure</keyword>
<keyword id="KW-0007">Acetylation</keyword>
<keyword id="KW-0963">Cytoplasm</keyword>
<keyword id="KW-0903">Direct protein sequencing</keyword>
<keyword id="KW-1017">Isopeptide bond</keyword>
<keyword id="KW-0488">Methylation</keyword>
<keyword id="KW-0523">Neurodegeneration</keyword>
<keyword id="KW-0539">Nucleus</keyword>
<keyword id="KW-0597">Phosphoprotein</keyword>
<keyword id="KW-1267">Proteomics identification</keyword>
<keyword id="KW-1185">Reference proteome</keyword>
<keyword id="KW-0687">Ribonucleoprotein</keyword>
<keyword id="KW-0690">Ribosome biogenesis</keyword>
<keyword id="KW-0950">Spinocerebellar ataxia</keyword>
<keyword id="KW-0832">Ubl conjugation</keyword>
<accession>O00567</accession>
<accession>Q2M3T6</accession>
<accession>Q9NQ05</accession>
<evidence type="ECO:0000250" key="1">
    <source>
        <dbReference type="UniProtKB" id="Q9D6Z1"/>
    </source>
</evidence>
<evidence type="ECO:0000255" key="2">
    <source>
        <dbReference type="PROSITE-ProRule" id="PRU00690"/>
    </source>
</evidence>
<evidence type="ECO:0000256" key="3">
    <source>
        <dbReference type="SAM" id="MobiDB-lite"/>
    </source>
</evidence>
<evidence type="ECO:0000269" key="4">
    <source>
    </source>
</evidence>
<evidence type="ECO:0000269" key="5">
    <source>
    </source>
</evidence>
<evidence type="ECO:0000269" key="6">
    <source>
    </source>
</evidence>
<evidence type="ECO:0000269" key="7">
    <source>
    </source>
</evidence>
<evidence type="ECO:0000269" key="8">
    <source>
    </source>
</evidence>
<evidence type="ECO:0000269" key="9">
    <source>
    </source>
</evidence>
<evidence type="ECO:0000269" key="10">
    <source>
    </source>
</evidence>
<evidence type="ECO:0000269" key="11">
    <source>
    </source>
</evidence>
<evidence type="ECO:0000269" key="12">
    <source>
    </source>
</evidence>
<evidence type="ECO:0000269" key="13">
    <source>
    </source>
</evidence>
<evidence type="ECO:0000305" key="14"/>
<evidence type="ECO:0000305" key="15">
    <source>
    </source>
</evidence>
<evidence type="ECO:0000312" key="16">
    <source>
        <dbReference type="HGNC" id="HGNC:15911"/>
    </source>
</evidence>
<evidence type="ECO:0007744" key="17">
    <source>
        <dbReference type="PDB" id="7MQ8"/>
    </source>
</evidence>
<evidence type="ECO:0007744" key="18">
    <source>
        <dbReference type="PDB" id="7MQ9"/>
    </source>
</evidence>
<evidence type="ECO:0007744" key="19">
    <source>
        <dbReference type="PDB" id="7MQA"/>
    </source>
</evidence>
<evidence type="ECO:0007744" key="20">
    <source>
    </source>
</evidence>
<evidence type="ECO:0007744" key="21">
    <source>
    </source>
</evidence>
<evidence type="ECO:0007744" key="22">
    <source>
    </source>
</evidence>
<evidence type="ECO:0007744" key="23">
    <source>
    </source>
</evidence>
<evidence type="ECO:0007744" key="24">
    <source>
    </source>
</evidence>
<evidence type="ECO:0007744" key="25">
    <source>
    </source>
</evidence>
<evidence type="ECO:0007744" key="26">
    <source>
    </source>
</evidence>
<evidence type="ECO:0007744" key="27">
    <source>
    </source>
</evidence>
<evidence type="ECO:0007744" key="28">
    <source>
    </source>
</evidence>
<evidence type="ECO:0007744" key="29">
    <source>
    </source>
</evidence>
<organism>
    <name type="scientific">Homo sapiens</name>
    <name type="common">Human</name>
    <dbReference type="NCBI Taxonomy" id="9606"/>
    <lineage>
        <taxon>Eukaryota</taxon>
        <taxon>Metazoa</taxon>
        <taxon>Chordata</taxon>
        <taxon>Craniata</taxon>
        <taxon>Vertebrata</taxon>
        <taxon>Euteleostomi</taxon>
        <taxon>Mammalia</taxon>
        <taxon>Eutheria</taxon>
        <taxon>Euarchontoglires</taxon>
        <taxon>Primates</taxon>
        <taxon>Haplorrhini</taxon>
        <taxon>Catarrhini</taxon>
        <taxon>Hominidae</taxon>
        <taxon>Homo</taxon>
    </lineage>
</organism>
<feature type="chain" id="PRO_0000219025" description="Nucleolar protein 56">
    <location>
        <begin position="1"/>
        <end position="594"/>
    </location>
</feature>
<feature type="domain" description="Nop" evidence="2">
    <location>
        <begin position="292"/>
        <end position="410"/>
    </location>
</feature>
<feature type="region of interest" description="Disordered" evidence="3">
    <location>
        <begin position="458"/>
        <end position="594"/>
    </location>
</feature>
<feature type="compositionally biased region" description="Low complexity" evidence="3">
    <location>
        <begin position="458"/>
        <end position="469"/>
    </location>
</feature>
<feature type="compositionally biased region" description="Low complexity" evidence="3">
    <location>
        <begin position="488"/>
        <end position="504"/>
    </location>
</feature>
<feature type="compositionally biased region" description="Basic residues" evidence="3">
    <location>
        <begin position="580"/>
        <end position="594"/>
    </location>
</feature>
<feature type="modified residue" description="Phosphoserine" evidence="23 24">
    <location>
        <position position="314"/>
    </location>
</feature>
<feature type="modified residue" description="Omega-N-methylarginine" evidence="25">
    <location>
        <position position="359"/>
    </location>
</feature>
<feature type="modified residue" description="Phosphoserine" evidence="1">
    <location>
        <position position="466"/>
    </location>
</feature>
<feature type="modified residue" description="Phosphoserine" evidence="1">
    <location>
        <position position="467"/>
    </location>
</feature>
<feature type="modified residue" description="Phosphothreonine" evidence="1">
    <location>
        <position position="468"/>
    </location>
</feature>
<feature type="modified residue" description="Phosphoserine" evidence="20">
    <location>
        <position position="511"/>
    </location>
</feature>
<feature type="modified residue" description="Phosphoserine" evidence="20 21 24">
    <location>
        <position position="519"/>
    </location>
</feature>
<feature type="modified residue" description="Phosphoserine" evidence="20 21 22 24 26">
    <location>
        <position position="520"/>
    </location>
</feature>
<feature type="modified residue" description="Phosphoserine" evidence="1">
    <location>
        <position position="537"/>
    </location>
</feature>
<feature type="modified residue" description="N6-acetyllysine" evidence="1">
    <location>
        <position position="561"/>
    </location>
</feature>
<feature type="modified residue" description="Phosphoserine" evidence="24 26">
    <location>
        <position position="563"/>
    </location>
</feature>
<feature type="modified residue" description="Phosphoserine" evidence="21 24">
    <location>
        <position position="569"/>
    </location>
</feature>
<feature type="modified residue" description="Phosphoserine" evidence="20 23 24">
    <location>
        <position position="570"/>
    </location>
</feature>
<feature type="modified residue" description="Phosphoserine" evidence="20">
    <location>
        <position position="579"/>
    </location>
</feature>
<feature type="modified residue" description="Phosphoserine" evidence="20">
    <location>
        <position position="581"/>
    </location>
</feature>
<feature type="cross-link" description="Glycyl lysine isopeptide (Lys-Gly) (interchain with G-Cter in SUMO2)" evidence="29">
    <location>
        <position position="87"/>
    </location>
</feature>
<feature type="cross-link" description="Glycyl lysine isopeptide (Lys-Gly) (interchain with G-Cter in SUMO2)" evidence="29">
    <location>
        <position position="230"/>
    </location>
</feature>
<feature type="cross-link" description="Glycyl lysine isopeptide (Lys-Gly) (interchain with G-Cter in SUMO2)" evidence="29">
    <location>
        <position position="240"/>
    </location>
</feature>
<feature type="cross-link" description="Glycyl lysine isopeptide (Lys-Gly) (interchain with G-Cter in SUMO2)" evidence="27 28 29">
    <location>
        <position position="540"/>
    </location>
</feature>
<feature type="cross-link" description="Glycyl lysine isopeptide (Lys-Gly) (interchain with G-Cter in SUMO2)" evidence="29">
    <location>
        <position position="564"/>
    </location>
</feature>
<feature type="sequence variant" id="VAR_028793" description="In dbSNP:rs2273137.">
    <original>I</original>
    <variation>V</variation>
    <location>
        <position position="121"/>
    </location>
</feature>
<feature type="sequence variant" id="VAR_028794" description="In dbSNP:rs6753." evidence="13">
    <original>M</original>
    <variation>T</variation>
    <location>
        <position position="475"/>
    </location>
</feature>
<feature type="sequence variant" id="VAR_014471" description="In dbSNP:rs5856.">
    <original>V</original>
    <variation>A</variation>
    <location>
        <position position="576"/>
    </location>
</feature>
<feature type="sequence conflict" description="In Ref. 1; CAA72789." evidence="14" ref="1">
    <original>L</original>
    <variation>V</variation>
    <location>
        <position position="17"/>
    </location>
</feature>
<feature type="sequence conflict" description="In Ref. 1; CAA72789." evidence="14" ref="1">
    <original>Q</original>
    <variation>QAE</variation>
    <location>
        <position position="427"/>
    </location>
</feature>
<feature type="sequence conflict" description="In Ref. 1; CAA72789." evidence="14" ref="1">
    <original>G</original>
    <variation>R</variation>
    <location>
        <position position="555"/>
    </location>
</feature>